<accession>O10295</accession>
<organismHost>
    <name type="scientific">Orgyia pseudotsugata</name>
    <name type="common">Douglas-fir tussock moth</name>
    <dbReference type="NCBI Taxonomy" id="33414"/>
</organismHost>
<protein>
    <recommendedName>
        <fullName>Uncharacterized 16.5 kDa protein</fullName>
    </recommendedName>
</protein>
<sequence>MMELQYNGQGYSKRFSRELVALMCAGAVSGIDWRRSSRRRLRVRDARVFSRLQRCSERYFWPDGTRFWCHARKRRRSPSLPARRPPTPREDALEDYAKEYGYDREDGEIYDREDGEIYDREDGEITPVYTRLKSLVVK</sequence>
<gene>
    <name type="ORF">ORF40</name>
</gene>
<dbReference type="EMBL" id="U75930">
    <property type="protein sequence ID" value="AAC59039.1"/>
    <property type="molecule type" value="Genomic_DNA"/>
</dbReference>
<dbReference type="RefSeq" id="NP_046196.1">
    <property type="nucleotide sequence ID" value="NC_001875.2"/>
</dbReference>
<dbReference type="SMR" id="O10295"/>
<dbReference type="KEGG" id="vg:911978"/>
<dbReference type="OrthoDB" id="14881at10239"/>
<dbReference type="Proteomes" id="UP000009248">
    <property type="component" value="Genome"/>
</dbReference>
<keyword id="KW-1185">Reference proteome</keyword>
<proteinExistence type="predicted"/>
<organism>
    <name type="scientific">Orgyia pseudotsugata multicapsid polyhedrosis virus</name>
    <name type="common">OpMNPV</name>
    <dbReference type="NCBI Taxonomy" id="262177"/>
    <lineage>
        <taxon>Viruses</taxon>
        <taxon>Viruses incertae sedis</taxon>
        <taxon>Naldaviricetes</taxon>
        <taxon>Lefavirales</taxon>
        <taxon>Baculoviridae</taxon>
        <taxon>Alphabaculovirus</taxon>
        <taxon>Alphabaculovirus orpseudotsugatae</taxon>
    </lineage>
</organism>
<reference key="1">
    <citation type="journal article" date="1997" name="Virology">
        <title>The sequence of the Orgyia pseudotsugata multinucleocapsid nuclear polyhedrosis virus genome.</title>
        <authorList>
            <person name="Ahrens C.H."/>
            <person name="Russell R.R."/>
            <person name="Funk C.J."/>
            <person name="Evans J."/>
            <person name="Harwood S."/>
            <person name="Rohrmann G.F."/>
        </authorList>
    </citation>
    <scope>NUCLEOTIDE SEQUENCE [LARGE SCALE GENOMIC DNA]</scope>
</reference>
<name>Y028_NPVOP</name>
<evidence type="ECO:0000256" key="1">
    <source>
        <dbReference type="SAM" id="MobiDB-lite"/>
    </source>
</evidence>
<feature type="chain" id="PRO_0000132967" description="Uncharacterized 16.5 kDa protein">
    <location>
        <begin position="1"/>
        <end position="138"/>
    </location>
</feature>
<feature type="region of interest" description="Disordered" evidence="1">
    <location>
        <begin position="74"/>
        <end position="96"/>
    </location>
</feature>
<feature type="compositionally biased region" description="Basic and acidic residues" evidence="1">
    <location>
        <begin position="87"/>
        <end position="96"/>
    </location>
</feature>